<proteinExistence type="inferred from homology"/>
<dbReference type="EC" id="3.6.5.-" evidence="1"/>
<dbReference type="EMBL" id="CP000386">
    <property type="protein sequence ID" value="ABG04485.1"/>
    <property type="molecule type" value="Genomic_DNA"/>
</dbReference>
<dbReference type="RefSeq" id="WP_011564502.1">
    <property type="nucleotide sequence ID" value="NC_008148.1"/>
</dbReference>
<dbReference type="SMR" id="Q1AVU3"/>
<dbReference type="STRING" id="266117.Rxyl_1523"/>
<dbReference type="KEGG" id="rxy:Rxyl_1523"/>
<dbReference type="eggNOG" id="COG0536">
    <property type="taxonomic scope" value="Bacteria"/>
</dbReference>
<dbReference type="HOGENOM" id="CLU_011747_2_1_11"/>
<dbReference type="OrthoDB" id="9807318at2"/>
<dbReference type="PhylomeDB" id="Q1AVU3"/>
<dbReference type="Proteomes" id="UP000006637">
    <property type="component" value="Chromosome"/>
</dbReference>
<dbReference type="GO" id="GO:0005737">
    <property type="term" value="C:cytoplasm"/>
    <property type="evidence" value="ECO:0007669"/>
    <property type="project" value="UniProtKB-SubCell"/>
</dbReference>
<dbReference type="GO" id="GO:0005525">
    <property type="term" value="F:GTP binding"/>
    <property type="evidence" value="ECO:0007669"/>
    <property type="project" value="UniProtKB-UniRule"/>
</dbReference>
<dbReference type="GO" id="GO:0003924">
    <property type="term" value="F:GTPase activity"/>
    <property type="evidence" value="ECO:0007669"/>
    <property type="project" value="UniProtKB-UniRule"/>
</dbReference>
<dbReference type="GO" id="GO:0000287">
    <property type="term" value="F:magnesium ion binding"/>
    <property type="evidence" value="ECO:0007669"/>
    <property type="project" value="InterPro"/>
</dbReference>
<dbReference type="GO" id="GO:0042254">
    <property type="term" value="P:ribosome biogenesis"/>
    <property type="evidence" value="ECO:0007669"/>
    <property type="project" value="UniProtKB-UniRule"/>
</dbReference>
<dbReference type="CDD" id="cd01898">
    <property type="entry name" value="Obg"/>
    <property type="match status" value="1"/>
</dbReference>
<dbReference type="FunFam" id="2.70.210.12:FF:000001">
    <property type="entry name" value="GTPase Obg"/>
    <property type="match status" value="1"/>
</dbReference>
<dbReference type="Gene3D" id="3.30.300.350">
    <property type="entry name" value="GTP-binding protein OBG, C-terminal domain"/>
    <property type="match status" value="1"/>
</dbReference>
<dbReference type="Gene3D" id="2.70.210.12">
    <property type="entry name" value="GTP1/OBG domain"/>
    <property type="match status" value="1"/>
</dbReference>
<dbReference type="Gene3D" id="3.40.50.300">
    <property type="entry name" value="P-loop containing nucleotide triphosphate hydrolases"/>
    <property type="match status" value="1"/>
</dbReference>
<dbReference type="HAMAP" id="MF_01454">
    <property type="entry name" value="GTPase_Obg"/>
    <property type="match status" value="1"/>
</dbReference>
<dbReference type="InterPro" id="IPR031167">
    <property type="entry name" value="G_OBG"/>
</dbReference>
<dbReference type="InterPro" id="IPR006073">
    <property type="entry name" value="GTP-bd"/>
</dbReference>
<dbReference type="InterPro" id="IPR014100">
    <property type="entry name" value="GTP-bd_Obg/CgtA"/>
</dbReference>
<dbReference type="InterPro" id="IPR036346">
    <property type="entry name" value="GTP-bd_prot_GTP1/OBG_C_sf"/>
</dbReference>
<dbReference type="InterPro" id="IPR006169">
    <property type="entry name" value="GTP1_OBG_dom"/>
</dbReference>
<dbReference type="InterPro" id="IPR036726">
    <property type="entry name" value="GTP1_OBG_dom_sf"/>
</dbReference>
<dbReference type="InterPro" id="IPR045086">
    <property type="entry name" value="OBG_GTPase"/>
</dbReference>
<dbReference type="InterPro" id="IPR015349">
    <property type="entry name" value="OCT_dom"/>
</dbReference>
<dbReference type="InterPro" id="IPR027417">
    <property type="entry name" value="P-loop_NTPase"/>
</dbReference>
<dbReference type="NCBIfam" id="TIGR02729">
    <property type="entry name" value="Obg_CgtA"/>
    <property type="match status" value="1"/>
</dbReference>
<dbReference type="NCBIfam" id="TIGR03595">
    <property type="entry name" value="Obg_CgtA_exten"/>
    <property type="match status" value="1"/>
</dbReference>
<dbReference type="NCBIfam" id="NF008954">
    <property type="entry name" value="PRK12296.1"/>
    <property type="match status" value="1"/>
</dbReference>
<dbReference type="NCBIfam" id="NF008955">
    <property type="entry name" value="PRK12297.1"/>
    <property type="match status" value="1"/>
</dbReference>
<dbReference type="NCBIfam" id="NF008956">
    <property type="entry name" value="PRK12299.1"/>
    <property type="match status" value="1"/>
</dbReference>
<dbReference type="PANTHER" id="PTHR11702">
    <property type="entry name" value="DEVELOPMENTALLY REGULATED GTP-BINDING PROTEIN-RELATED"/>
    <property type="match status" value="1"/>
</dbReference>
<dbReference type="PANTHER" id="PTHR11702:SF31">
    <property type="entry name" value="MITOCHONDRIAL RIBOSOME-ASSOCIATED GTPASE 2"/>
    <property type="match status" value="1"/>
</dbReference>
<dbReference type="Pfam" id="PF09269">
    <property type="entry name" value="DUF1967"/>
    <property type="match status" value="1"/>
</dbReference>
<dbReference type="Pfam" id="PF01018">
    <property type="entry name" value="GTP1_OBG"/>
    <property type="match status" value="1"/>
</dbReference>
<dbReference type="Pfam" id="PF01926">
    <property type="entry name" value="MMR_HSR1"/>
    <property type="match status" value="1"/>
</dbReference>
<dbReference type="PRINTS" id="PR00326">
    <property type="entry name" value="GTP1OBG"/>
</dbReference>
<dbReference type="SUPFAM" id="SSF102741">
    <property type="entry name" value="Obg GTP-binding protein C-terminal domain"/>
    <property type="match status" value="1"/>
</dbReference>
<dbReference type="SUPFAM" id="SSF82051">
    <property type="entry name" value="Obg GTP-binding protein N-terminal domain"/>
    <property type="match status" value="1"/>
</dbReference>
<dbReference type="SUPFAM" id="SSF52540">
    <property type="entry name" value="P-loop containing nucleoside triphosphate hydrolases"/>
    <property type="match status" value="1"/>
</dbReference>
<dbReference type="PROSITE" id="PS51710">
    <property type="entry name" value="G_OBG"/>
    <property type="match status" value="1"/>
</dbReference>
<dbReference type="PROSITE" id="PS51883">
    <property type="entry name" value="OBG"/>
    <property type="match status" value="1"/>
</dbReference>
<dbReference type="PROSITE" id="PS51881">
    <property type="entry name" value="OCT"/>
    <property type="match status" value="1"/>
</dbReference>
<protein>
    <recommendedName>
        <fullName evidence="1">GTPase Obg</fullName>
        <ecNumber evidence="1">3.6.5.-</ecNumber>
    </recommendedName>
    <alternativeName>
        <fullName evidence="1">GTP-binding protein Obg</fullName>
    </alternativeName>
</protein>
<feature type="chain" id="PRO_0000386212" description="GTPase Obg">
    <location>
        <begin position="1"/>
        <end position="411"/>
    </location>
</feature>
<feature type="domain" description="Obg" evidence="3">
    <location>
        <begin position="1"/>
        <end position="157"/>
    </location>
</feature>
<feature type="domain" description="OBG-type G" evidence="1">
    <location>
        <begin position="158"/>
        <end position="330"/>
    </location>
</feature>
<feature type="domain" description="OCT" evidence="2">
    <location>
        <begin position="335"/>
        <end position="411"/>
    </location>
</feature>
<feature type="region of interest" description="Disordered" evidence="4">
    <location>
        <begin position="20"/>
        <end position="45"/>
    </location>
</feature>
<feature type="compositionally biased region" description="Gly residues" evidence="4">
    <location>
        <begin position="33"/>
        <end position="43"/>
    </location>
</feature>
<feature type="binding site" evidence="1">
    <location>
        <begin position="164"/>
        <end position="171"/>
    </location>
    <ligand>
        <name>GTP</name>
        <dbReference type="ChEBI" id="CHEBI:37565"/>
    </ligand>
</feature>
<feature type="binding site" evidence="1">
    <location>
        <position position="171"/>
    </location>
    <ligand>
        <name>Mg(2+)</name>
        <dbReference type="ChEBI" id="CHEBI:18420"/>
    </ligand>
</feature>
<feature type="binding site" evidence="1">
    <location>
        <begin position="189"/>
        <end position="193"/>
    </location>
    <ligand>
        <name>GTP</name>
        <dbReference type="ChEBI" id="CHEBI:37565"/>
    </ligand>
</feature>
<feature type="binding site" evidence="1">
    <location>
        <position position="191"/>
    </location>
    <ligand>
        <name>Mg(2+)</name>
        <dbReference type="ChEBI" id="CHEBI:18420"/>
    </ligand>
</feature>
<feature type="binding site" evidence="1">
    <location>
        <begin position="212"/>
        <end position="215"/>
    </location>
    <ligand>
        <name>GTP</name>
        <dbReference type="ChEBI" id="CHEBI:37565"/>
    </ligand>
</feature>
<feature type="binding site" evidence="1">
    <location>
        <begin position="276"/>
        <end position="279"/>
    </location>
    <ligand>
        <name>GTP</name>
        <dbReference type="ChEBI" id="CHEBI:37565"/>
    </ligand>
</feature>
<feature type="binding site" evidence="1">
    <location>
        <begin position="311"/>
        <end position="313"/>
    </location>
    <ligand>
        <name>GTP</name>
        <dbReference type="ChEBI" id="CHEBI:37565"/>
    </ligand>
</feature>
<gene>
    <name evidence="1" type="primary">obg</name>
    <name type="ordered locus">Rxyl_1523</name>
</gene>
<evidence type="ECO:0000255" key="1">
    <source>
        <dbReference type="HAMAP-Rule" id="MF_01454"/>
    </source>
</evidence>
<evidence type="ECO:0000255" key="2">
    <source>
        <dbReference type="PROSITE-ProRule" id="PRU01229"/>
    </source>
</evidence>
<evidence type="ECO:0000255" key="3">
    <source>
        <dbReference type="PROSITE-ProRule" id="PRU01231"/>
    </source>
</evidence>
<evidence type="ECO:0000256" key="4">
    <source>
        <dbReference type="SAM" id="MobiDB-lite"/>
    </source>
</evidence>
<comment type="function">
    <text evidence="1">An essential GTPase which binds GTP, GDP and possibly (p)ppGpp with moderate affinity, with high nucleotide exchange rates and a fairly low GTP hydrolysis rate. Plays a role in control of the cell cycle, stress response, ribosome biogenesis and in those bacteria that undergo differentiation, in morphogenesis control.</text>
</comment>
<comment type="cofactor">
    <cofactor evidence="1">
        <name>Mg(2+)</name>
        <dbReference type="ChEBI" id="CHEBI:18420"/>
    </cofactor>
</comment>
<comment type="subunit">
    <text evidence="1">Monomer.</text>
</comment>
<comment type="subcellular location">
    <subcellularLocation>
        <location evidence="1">Cytoplasm</location>
    </subcellularLocation>
</comment>
<comment type="similarity">
    <text evidence="1">Belongs to the TRAFAC class OBG-HflX-like GTPase superfamily. OBG GTPase family.</text>
</comment>
<accession>Q1AVU3</accession>
<sequence length="411" mass="44319">MQFIDEARFVVRGGRGGDGAVSFHREKYRPRGGPDGGRGGDGGSVILRATEDLQTLERYSRRKVISAGRGGHGSGNNRAGERGRDVVLDVPVGTLVYDESGLLADLAEPGQTFVAARGGEGGRGNASFATSRRQAPAFRELGLPGEEREIRLELRVLSDVGLVGLPNAGKSSLLRALSAARPRVGDYPFTTLTPQLGVVEERGYARPFVVADIPGLISGASEGRGLGNRFLRHVARARLLVLVLDASEDPEGAERTLRAELGAAGLSGRPSLVVLNKVDLLDAELRAYLGEAFPGAPQVSARTGEGVGELARLLERRLRELERSAEAAPRPGHRVFRPSWRGLRVERENGAYVVSGREVERLALKTDWDNPEGVEHFQRELERRGVMGALRRAGAGEGDEVRIGDVSFEFR</sequence>
<reference key="1">
    <citation type="submission" date="2006-06" db="EMBL/GenBank/DDBJ databases">
        <title>Complete sequence of Rubrobacter xylanophilus DSM 9941.</title>
        <authorList>
            <consortium name="US DOE Joint Genome Institute"/>
            <person name="Copeland A."/>
            <person name="Lucas S."/>
            <person name="Lapidus A."/>
            <person name="Barry K."/>
            <person name="Detter J.C."/>
            <person name="Glavina del Rio T."/>
            <person name="Hammon N."/>
            <person name="Israni S."/>
            <person name="Dalin E."/>
            <person name="Tice H."/>
            <person name="Pitluck S."/>
            <person name="Munk A.C."/>
            <person name="Brettin T."/>
            <person name="Bruce D."/>
            <person name="Han C."/>
            <person name="Tapia R."/>
            <person name="Gilna P."/>
            <person name="Schmutz J."/>
            <person name="Larimer F."/>
            <person name="Land M."/>
            <person name="Hauser L."/>
            <person name="Kyrpides N."/>
            <person name="Lykidis A."/>
            <person name="da Costa M.S."/>
            <person name="Rainey F.A."/>
            <person name="Empadinhas N."/>
            <person name="Jolivet E."/>
            <person name="Battista J.R."/>
            <person name="Richardson P."/>
        </authorList>
    </citation>
    <scope>NUCLEOTIDE SEQUENCE [LARGE SCALE GENOMIC DNA]</scope>
    <source>
        <strain>DSM 9941 / JCM 11954 / NBRC 16129 / PRD-1</strain>
    </source>
</reference>
<keyword id="KW-0963">Cytoplasm</keyword>
<keyword id="KW-0342">GTP-binding</keyword>
<keyword id="KW-0378">Hydrolase</keyword>
<keyword id="KW-0460">Magnesium</keyword>
<keyword id="KW-0479">Metal-binding</keyword>
<keyword id="KW-0547">Nucleotide-binding</keyword>
<keyword id="KW-1185">Reference proteome</keyword>
<organism>
    <name type="scientific">Rubrobacter xylanophilus (strain DSM 9941 / JCM 11954 / NBRC 16129 / PRD-1)</name>
    <dbReference type="NCBI Taxonomy" id="266117"/>
    <lineage>
        <taxon>Bacteria</taxon>
        <taxon>Bacillati</taxon>
        <taxon>Actinomycetota</taxon>
        <taxon>Rubrobacteria</taxon>
        <taxon>Rubrobacterales</taxon>
        <taxon>Rubrobacteraceae</taxon>
        <taxon>Rubrobacter</taxon>
    </lineage>
</organism>
<name>OBG_RUBXD</name>